<reference key="1">
    <citation type="journal article" date="2004" name="Nature">
        <title>The DNA sequence and biology of human chromosome 19.</title>
        <authorList>
            <person name="Grimwood J."/>
            <person name="Gordon L.A."/>
            <person name="Olsen A.S."/>
            <person name="Terry A."/>
            <person name="Schmutz J."/>
            <person name="Lamerdin J.E."/>
            <person name="Hellsten U."/>
            <person name="Goodstein D."/>
            <person name="Couronne O."/>
            <person name="Tran-Gyamfi M."/>
            <person name="Aerts A."/>
            <person name="Altherr M."/>
            <person name="Ashworth L."/>
            <person name="Bajorek E."/>
            <person name="Black S."/>
            <person name="Branscomb E."/>
            <person name="Caenepeel S."/>
            <person name="Carrano A.V."/>
            <person name="Caoile C."/>
            <person name="Chan Y.M."/>
            <person name="Christensen M."/>
            <person name="Cleland C.A."/>
            <person name="Copeland A."/>
            <person name="Dalin E."/>
            <person name="Dehal P."/>
            <person name="Denys M."/>
            <person name="Detter J.C."/>
            <person name="Escobar J."/>
            <person name="Flowers D."/>
            <person name="Fotopulos D."/>
            <person name="Garcia C."/>
            <person name="Georgescu A.M."/>
            <person name="Glavina T."/>
            <person name="Gomez M."/>
            <person name="Gonzales E."/>
            <person name="Groza M."/>
            <person name="Hammon N."/>
            <person name="Hawkins T."/>
            <person name="Haydu L."/>
            <person name="Ho I."/>
            <person name="Huang W."/>
            <person name="Israni S."/>
            <person name="Jett J."/>
            <person name="Kadner K."/>
            <person name="Kimball H."/>
            <person name="Kobayashi A."/>
            <person name="Larionov V."/>
            <person name="Leem S.-H."/>
            <person name="Lopez F."/>
            <person name="Lou Y."/>
            <person name="Lowry S."/>
            <person name="Malfatti S."/>
            <person name="Martinez D."/>
            <person name="McCready P.M."/>
            <person name="Medina C."/>
            <person name="Morgan J."/>
            <person name="Nelson K."/>
            <person name="Nolan M."/>
            <person name="Ovcharenko I."/>
            <person name="Pitluck S."/>
            <person name="Pollard M."/>
            <person name="Popkie A.P."/>
            <person name="Predki P."/>
            <person name="Quan G."/>
            <person name="Ramirez L."/>
            <person name="Rash S."/>
            <person name="Retterer J."/>
            <person name="Rodriguez A."/>
            <person name="Rogers S."/>
            <person name="Salamov A."/>
            <person name="Salazar A."/>
            <person name="She X."/>
            <person name="Smith D."/>
            <person name="Slezak T."/>
            <person name="Solovyev V."/>
            <person name="Thayer N."/>
            <person name="Tice H."/>
            <person name="Tsai M."/>
            <person name="Ustaszewska A."/>
            <person name="Vo N."/>
            <person name="Wagner M."/>
            <person name="Wheeler J."/>
            <person name="Wu K."/>
            <person name="Xie G."/>
            <person name="Yang J."/>
            <person name="Dubchak I."/>
            <person name="Furey T.S."/>
            <person name="DeJong P."/>
            <person name="Dickson M."/>
            <person name="Gordon D."/>
            <person name="Eichler E.E."/>
            <person name="Pennacchio L.A."/>
            <person name="Richardson P."/>
            <person name="Stubbs L."/>
            <person name="Rokhsar D.S."/>
            <person name="Myers R.M."/>
            <person name="Rubin E.M."/>
            <person name="Lucas S.M."/>
        </authorList>
    </citation>
    <scope>NUCLEOTIDE SEQUENCE [LARGE SCALE GENOMIC DNA]</scope>
</reference>
<reference key="2">
    <citation type="journal article" date="2002" name="Immunogenetics">
        <title>Some human KIR haplotypes contain two KIR2DL5 genes: KIR2DL5A and KIR2DL5B.</title>
        <authorList>
            <person name="Gomez-Lozano N."/>
            <person name="Gardiner C.M."/>
            <person name="Parham P."/>
            <person name="Vilches C."/>
        </authorList>
    </citation>
    <scope>GENE FAMILY</scope>
</reference>
<proteinExistence type="inferred from homology"/>
<accession>Q8N109</accession>
<dbReference type="EMBL" id="AL133414">
    <property type="status" value="NOT_ANNOTATED_CDS"/>
    <property type="molecule type" value="Genomic_DNA"/>
</dbReference>
<dbReference type="RefSeq" id="NP_065396.1">
    <property type="nucleotide sequence ID" value="NM_020535.3"/>
</dbReference>
<dbReference type="SMR" id="Q8N109"/>
<dbReference type="BioGRID" id="110007">
    <property type="interactions" value="2"/>
</dbReference>
<dbReference type="BioGRID" id="121479">
    <property type="interactions" value="1"/>
</dbReference>
<dbReference type="FunCoup" id="Q8N109">
    <property type="interactions" value="183"/>
</dbReference>
<dbReference type="GlyCosmos" id="Q8N109">
    <property type="glycosylation" value="3 sites, No reported glycans"/>
</dbReference>
<dbReference type="GlyGen" id="Q8N109">
    <property type="glycosylation" value="5 sites"/>
</dbReference>
<dbReference type="iPTMnet" id="Q8N109"/>
<dbReference type="PhosphoSitePlus" id="Q8N109"/>
<dbReference type="BioMuta" id="KIR2DL5A"/>
<dbReference type="DMDM" id="74759760"/>
<dbReference type="jPOST" id="Q8N109"/>
<dbReference type="MassIVE" id="Q8N109"/>
<dbReference type="PeptideAtlas" id="Q8N109"/>
<dbReference type="DNASU" id="57292"/>
<dbReference type="Ensembl" id="ENST00000611422.1">
    <property type="protein sequence ID" value="ENSP00000479384.1"/>
    <property type="gene ID" value="ENSG00000274676.1"/>
</dbReference>
<dbReference type="Ensembl" id="ENST00000612730.1">
    <property type="protein sequence ID" value="ENSP00000483324.1"/>
    <property type="gene ID" value="ENSG00000274143.1"/>
</dbReference>
<dbReference type="Ensembl" id="ENST00000613155.1">
    <property type="protein sequence ID" value="ENSP00000484296.1"/>
    <property type="gene ID" value="ENSG00000275596.1"/>
</dbReference>
<dbReference type="Ensembl" id="ENST00000639225.1">
    <property type="protein sequence ID" value="ENSP00000491352.1"/>
    <property type="gene ID" value="ENSG00000288357.1"/>
</dbReference>
<dbReference type="Ensembl" id="ENST00000644241.1">
    <property type="protein sequence ID" value="ENSP00000496435.1"/>
    <property type="gene ID" value="ENSG00000288357.1"/>
</dbReference>
<dbReference type="GeneID" id="57292"/>
<dbReference type="KEGG" id="hsa:57292"/>
<dbReference type="MANE-Select" id="ENST00000613155.1">
    <property type="protein sequence ID" value="ENSP00000484296.1"/>
    <property type="RefSeq nucleotide sequence ID" value="NM_020535.3"/>
    <property type="RefSeq protein sequence ID" value="NP_065396.1"/>
</dbReference>
<dbReference type="UCSC" id="uc032ivi.2">
    <property type="organism name" value="human"/>
</dbReference>
<dbReference type="AGR" id="HGNC:16345"/>
<dbReference type="CTD" id="57292"/>
<dbReference type="DisGeNET" id="57292"/>
<dbReference type="GeneCards" id="KIR2DL5A"/>
<dbReference type="HGNC" id="HGNC:16345">
    <property type="gene designation" value="KIR2DL5A"/>
</dbReference>
<dbReference type="MalaCards" id="KIR2DL5A"/>
<dbReference type="MIM" id="605305">
    <property type="type" value="gene"/>
</dbReference>
<dbReference type="neXtProt" id="NX_Q8N109"/>
<dbReference type="OpenTargets" id="ENSG00000274143"/>
<dbReference type="PharmGKB" id="PA142671590"/>
<dbReference type="InParanoid" id="Q8N109"/>
<dbReference type="PAN-GO" id="Q8N109">
    <property type="GO annotations" value="1 GO annotation based on evolutionary models"/>
</dbReference>
<dbReference type="PathwayCommons" id="Q8N109"/>
<dbReference type="SignaLink" id="Q8N109"/>
<dbReference type="BioGRID-ORCS" id="57292">
    <property type="hits" value="1 hit in 27 CRISPR screens"/>
</dbReference>
<dbReference type="GenomeRNAi" id="57292"/>
<dbReference type="Pharos" id="Q8N109">
    <property type="development level" value="Tdark"/>
</dbReference>
<dbReference type="PRO" id="PR:Q8N109"/>
<dbReference type="Proteomes" id="UP000005640">
    <property type="component" value="Unplaced"/>
</dbReference>
<dbReference type="RNAct" id="Q8N109">
    <property type="molecule type" value="protein"/>
</dbReference>
<dbReference type="GO" id="GO:0005886">
    <property type="term" value="C:plasma membrane"/>
    <property type="evidence" value="ECO:0000318"/>
    <property type="project" value="GO_Central"/>
</dbReference>
<dbReference type="GO" id="GO:0002764">
    <property type="term" value="P:immune response-regulating signaling pathway"/>
    <property type="evidence" value="ECO:0000318"/>
    <property type="project" value="GO_Central"/>
</dbReference>
<dbReference type="FunFam" id="2.60.40.10:FF:000033">
    <property type="entry name" value="Killer cell immunoglobulin-like receptor"/>
    <property type="match status" value="1"/>
</dbReference>
<dbReference type="FunFam" id="2.60.40.10:FF:000049">
    <property type="entry name" value="Leukocyte immunoglobulin-like receptor subfamily B member 1"/>
    <property type="match status" value="1"/>
</dbReference>
<dbReference type="Gene3D" id="2.60.40.10">
    <property type="entry name" value="Immunoglobulins"/>
    <property type="match status" value="2"/>
</dbReference>
<dbReference type="InterPro" id="IPR036179">
    <property type="entry name" value="Ig-like_dom_sf"/>
</dbReference>
<dbReference type="InterPro" id="IPR013783">
    <property type="entry name" value="Ig-like_fold"/>
</dbReference>
<dbReference type="InterPro" id="IPR050412">
    <property type="entry name" value="Ig-like_Receptors_ImmuneReg"/>
</dbReference>
<dbReference type="InterPro" id="IPR003599">
    <property type="entry name" value="Ig_sub"/>
</dbReference>
<dbReference type="InterPro" id="IPR013151">
    <property type="entry name" value="Immunoglobulin_dom"/>
</dbReference>
<dbReference type="PANTHER" id="PTHR11738:SF169">
    <property type="entry name" value="KILLER CELL IMMUNOGLOBULIN-LIKE RECEPTOR 2DL5A-RELATED"/>
    <property type="match status" value="1"/>
</dbReference>
<dbReference type="PANTHER" id="PTHR11738">
    <property type="entry name" value="MHC CLASS I NK CELL RECEPTOR"/>
    <property type="match status" value="1"/>
</dbReference>
<dbReference type="Pfam" id="PF00047">
    <property type="entry name" value="ig"/>
    <property type="match status" value="2"/>
</dbReference>
<dbReference type="SMART" id="SM00409">
    <property type="entry name" value="IG"/>
    <property type="match status" value="2"/>
</dbReference>
<dbReference type="SUPFAM" id="SSF48726">
    <property type="entry name" value="Immunoglobulin"/>
    <property type="match status" value="2"/>
</dbReference>
<keyword id="KW-1003">Cell membrane</keyword>
<keyword id="KW-1015">Disulfide bond</keyword>
<keyword id="KW-0325">Glycoprotein</keyword>
<keyword id="KW-0393">Immunoglobulin domain</keyword>
<keyword id="KW-0472">Membrane</keyword>
<keyword id="KW-0675">Receptor</keyword>
<keyword id="KW-1185">Reference proteome</keyword>
<keyword id="KW-0677">Repeat</keyword>
<keyword id="KW-0732">Signal</keyword>
<keyword id="KW-0812">Transmembrane</keyword>
<keyword id="KW-1133">Transmembrane helix</keyword>
<evidence type="ECO:0000250" key="1"/>
<evidence type="ECO:0000255" key="2"/>
<evidence type="ECO:0000256" key="3">
    <source>
        <dbReference type="SAM" id="MobiDB-lite"/>
    </source>
</evidence>
<evidence type="ECO:0000305" key="4"/>
<feature type="signal peptide" evidence="2">
    <location>
        <begin position="1"/>
        <end position="21"/>
    </location>
</feature>
<feature type="chain" id="PRO_0000300638" description="Killer cell immunoglobulin-like receptor 2DL5A">
    <location>
        <begin position="22"/>
        <end position="375"/>
    </location>
</feature>
<feature type="topological domain" description="Extracellular" evidence="2">
    <location>
        <begin position="22"/>
        <end position="238"/>
    </location>
</feature>
<feature type="transmembrane region" description="Helical" evidence="2">
    <location>
        <begin position="239"/>
        <end position="259"/>
    </location>
</feature>
<feature type="topological domain" description="Cytoplasmic" evidence="2">
    <location>
        <begin position="260"/>
        <end position="375"/>
    </location>
</feature>
<feature type="domain" description="Ig-like C2-type 1">
    <location>
        <begin position="42"/>
        <end position="102"/>
    </location>
</feature>
<feature type="domain" description="Ig-like C2-type 2">
    <location>
        <begin position="137"/>
        <end position="200"/>
    </location>
</feature>
<feature type="region of interest" description="Disordered" evidence="3">
    <location>
        <begin position="213"/>
        <end position="233"/>
    </location>
</feature>
<feature type="region of interest" description="Disordered" evidence="3">
    <location>
        <begin position="334"/>
        <end position="375"/>
    </location>
</feature>
<feature type="compositionally biased region" description="Low complexity" evidence="3">
    <location>
        <begin position="219"/>
        <end position="231"/>
    </location>
</feature>
<feature type="compositionally biased region" description="Polar residues" evidence="3">
    <location>
        <begin position="355"/>
        <end position="366"/>
    </location>
</feature>
<feature type="glycosylation site" description="N-linked (GlcNAc...) asparagine" evidence="2">
    <location>
        <position position="139"/>
    </location>
</feature>
<feature type="glycosylation site" description="N-linked (GlcNAc...) asparagine" evidence="2">
    <location>
        <position position="173"/>
    </location>
</feature>
<feature type="glycosylation site" description="N-linked (GlcNAc...) asparagine" evidence="2">
    <location>
        <position position="218"/>
    </location>
</feature>
<feature type="disulfide bond" evidence="1">
    <location>
        <begin position="49"/>
        <end position="95"/>
    </location>
</feature>
<feature type="disulfide bond" evidence="1">
    <location>
        <begin position="144"/>
        <end position="193"/>
    </location>
</feature>
<organism>
    <name type="scientific">Homo sapiens</name>
    <name type="common">Human</name>
    <dbReference type="NCBI Taxonomy" id="9606"/>
    <lineage>
        <taxon>Eukaryota</taxon>
        <taxon>Metazoa</taxon>
        <taxon>Chordata</taxon>
        <taxon>Craniata</taxon>
        <taxon>Vertebrata</taxon>
        <taxon>Euteleostomi</taxon>
        <taxon>Mammalia</taxon>
        <taxon>Eutheria</taxon>
        <taxon>Euarchontoglires</taxon>
        <taxon>Primates</taxon>
        <taxon>Haplorrhini</taxon>
        <taxon>Catarrhini</taxon>
        <taxon>Hominidae</taxon>
        <taxon>Homo</taxon>
    </lineage>
</organism>
<name>KI2LA_HUMAN</name>
<comment type="function">
    <text>Receptor on natural killer (NK) cells for HLA-C alleles. Inhibits the activity of NK cells thus preventing cell lysis.</text>
</comment>
<comment type="subcellular location">
    <subcellularLocation>
        <location>Cell membrane</location>
        <topology>Single-pass type I membrane protein</topology>
    </subcellularLocation>
</comment>
<comment type="similarity">
    <text evidence="4">Belongs to the immunoglobulin superfamily.</text>
</comment>
<protein>
    <recommendedName>
        <fullName>Killer cell immunoglobulin-like receptor 2DL5A</fullName>
    </recommendedName>
    <cdAntigenName>CD158f1</cdAntigenName>
</protein>
<gene>
    <name type="primary">KIR2DL5A</name>
    <name type="synonym">CD158F</name>
    <name type="synonym">CD158F1</name>
    <name type="synonym">KIR2DL5</name>
</gene>
<sequence>MSLMVISMACVGFFLLQGAWTHEGGQDKPLLSAWPSAVVPRGGHVTLLCRSRLGFTIFSLYKEDGVPVPELYNKIFWKSILMGPVTPAHAGTYRCRGSHPRSPIEWSAPSNPLVIVVTGLFGKPSLSAQPGPTVRTGENVTLSCSSRSSFDMYHLSREGRAHEPRLPAVPSVNGTFQADFPLGPATHGGTYTCFGSLHDSPYEWSDPSDPLLVSVTGNSSSSSSSPTEPSSKTGIRRHLHILIGTSVAIILFIILFFFLLHCCCSNKKNAAVMDQEPAGDRTVNREDSDDQDPQEVTYAQLDHCVFTQTKITSPSQRPKTPPTDTTMYMELPNAKPRSLSPAHKHHSQALRGSSRETTALSQNRVASSHVPAAGI</sequence>